<reference key="1">
    <citation type="journal article" date="1995" name="Arch. Biochem. Biophys.">
        <title>Characterization of flavin-containing monooxygenase 5 (FMO5) cloned from human and guinea pig: evidence that the unique catalytic properties of FMO5 are not confined to the rabbit ortholog.</title>
        <authorList>
            <person name="Overby L.H."/>
            <person name="Buckpitt A.R."/>
            <person name="Lawton M.P."/>
            <person name="Atta-Asafo-Adjei E."/>
            <person name="Schulze J."/>
            <person name="Philpot R.M."/>
        </authorList>
    </citation>
    <scope>NUCLEOTIDE SEQUENCE [MRNA]</scope>
    <scope>TISSUE SPECIFICITY</scope>
    <scope>CATALYTIC ACTIVITY</scope>
    <scope>FUNCTION</scope>
    <source>
        <strain>Hartley</strain>
        <tissue>Liver</tissue>
    </source>
</reference>
<organism>
    <name type="scientific">Cavia porcellus</name>
    <name type="common">Guinea pig</name>
    <dbReference type="NCBI Taxonomy" id="10141"/>
    <lineage>
        <taxon>Eukaryota</taxon>
        <taxon>Metazoa</taxon>
        <taxon>Chordata</taxon>
        <taxon>Craniata</taxon>
        <taxon>Vertebrata</taxon>
        <taxon>Euteleostomi</taxon>
        <taxon>Mammalia</taxon>
        <taxon>Eutheria</taxon>
        <taxon>Euarchontoglires</taxon>
        <taxon>Glires</taxon>
        <taxon>Rodentia</taxon>
        <taxon>Hystricomorpha</taxon>
        <taxon>Caviidae</taxon>
        <taxon>Cavia</taxon>
    </lineage>
</organism>
<accession>P49109</accession>
<evidence type="ECO:0000250" key="1">
    <source>
        <dbReference type="UniProtKB" id="P49326"/>
    </source>
</evidence>
<evidence type="ECO:0000250" key="2">
    <source>
        <dbReference type="UniProtKB" id="P97872"/>
    </source>
</evidence>
<evidence type="ECO:0000250" key="3">
    <source>
        <dbReference type="UniProtKB" id="Q8K4C0"/>
    </source>
</evidence>
<evidence type="ECO:0000250" key="4">
    <source>
        <dbReference type="UniProtKB" id="Q9HFE4"/>
    </source>
</evidence>
<evidence type="ECO:0000255" key="5"/>
<evidence type="ECO:0000269" key="6">
    <source>
    </source>
</evidence>
<evidence type="ECO:0000305" key="7"/>
<evidence type="ECO:0000305" key="8">
    <source>
    </source>
</evidence>
<sequence length="533" mass="60125">MTKKRIAVIGGGVSGLSSIKCCLEEGLEPVCFERSADIGGLWRFQENPEEGRASIYKSVIINTSKEMMCFSDYPIPDHYPNFMHNSHVLEYFRMYAKEFGLLKYIQFKTTVCNVKKRPDFSTSGQWEVVTEHEGKTKVDVFDAVMVCTGHHTNAHLPLESFPGIEKFKGQYFHSRDYKNPEAFTGKRVVIIGIGNSGGDLAVEISHTAKQVFLSTRRGSWILNRVGKHGYPTDVLLSSRFTYFLSKILGQSLSNAYVEKQMNERFDHEMFGLKPKHRAMSQHPTVNDDLPNRIIAGMVKVKGNVKEFTETAAIFEDGSREDDIDAVIFATGYSFDFPFLEDSVKVVKNKVSLYKKVFPPNLERPTLAIIGLIQPLGAIMPISELQGRWAVQVFKGLKTLPSQSEMMAEITKAQEEIAKRYVDSQRHTIQGDYIQTMEEIAEFVGVKPNLLSLAFTDPKLALKLFFGPCTPIHYRLQGPGKWHGARKAILTTYDRIRKPLNTRETEKSNSMVSAVTTGCFMLAVVFFAIIMAYA</sequence>
<gene>
    <name type="primary">FMO5</name>
</gene>
<feature type="chain" id="PRO_0000147664" description="Flavin-containing monooxygenase 5">
    <location>
        <begin position="1"/>
        <end position="533"/>
    </location>
</feature>
<feature type="transmembrane region" description="Helical" evidence="5">
    <location>
        <begin position="510"/>
        <end position="530"/>
    </location>
</feature>
<feature type="binding site" evidence="4">
    <location>
        <begin position="10"/>
        <end position="14"/>
    </location>
    <ligand>
        <name>FAD</name>
        <dbReference type="ChEBI" id="CHEBI:57692"/>
    </ligand>
</feature>
<feature type="binding site" evidence="4">
    <location>
        <position position="33"/>
    </location>
    <ligand>
        <name>FAD</name>
        <dbReference type="ChEBI" id="CHEBI:57692"/>
    </ligand>
</feature>
<feature type="binding site" evidence="4">
    <location>
        <begin position="41"/>
        <end position="42"/>
    </location>
    <ligand>
        <name>FAD</name>
        <dbReference type="ChEBI" id="CHEBI:57692"/>
    </ligand>
</feature>
<feature type="binding site" evidence="4">
    <location>
        <begin position="62"/>
        <end position="63"/>
    </location>
    <ligand>
        <name>FAD</name>
        <dbReference type="ChEBI" id="CHEBI:57692"/>
    </ligand>
</feature>
<feature type="binding site" evidence="4">
    <location>
        <begin position="196"/>
        <end position="199"/>
    </location>
    <ligand>
        <name>NADP(+)</name>
        <dbReference type="ChEBI" id="CHEBI:58349"/>
    </ligand>
</feature>
<feature type="modified residue" description="Dimethylated arginine" evidence="3">
    <location>
        <position position="5"/>
    </location>
</feature>
<feature type="modified residue" description="Phosphoserine" evidence="1">
    <location>
        <position position="54"/>
    </location>
</feature>
<feature type="modified residue" description="Phosphotyrosine" evidence="1">
    <location>
        <position position="56"/>
    </location>
</feature>
<feature type="modified residue" description="Phosphoserine" evidence="1">
    <location>
        <position position="58"/>
    </location>
</feature>
<feature type="modified residue" description="Phosphoserine" evidence="1">
    <location>
        <position position="280"/>
    </location>
</feature>
<feature type="modified residue" description="Phosphothreonine" evidence="1">
    <location>
        <position position="284"/>
    </location>
</feature>
<feature type="modified residue" description="Phosphoserine" evidence="2">
    <location>
        <position position="401"/>
    </location>
</feature>
<protein>
    <recommendedName>
        <fullName>Flavin-containing monooxygenase 5</fullName>
        <shortName evidence="7">FMO 5</shortName>
    </recommendedName>
    <alternativeName>
        <fullName evidence="7">Dimethylaniline monooxygenase [N-oxide-forming] 5</fullName>
        <ecNumber evidence="6">1.14.13.8</ecNumber>
    </alternativeName>
    <alternativeName>
        <fullName>Dimethylaniline oxidase 5</fullName>
    </alternativeName>
    <alternativeName>
        <fullName>Hepatic flavin-containing monooxygenase 5</fullName>
    </alternativeName>
    <alternativeName>
        <fullName evidence="1">NADPH oxidase</fullName>
        <ecNumber evidence="1">1.6.3.1</ecNumber>
    </alternativeName>
</protein>
<comment type="function">
    <text evidence="1 2 6">Acts as a Baeyer-Villiger monooxygenase on a broad range of substrates. Catalyzes the insertion of an oxygen atom into a carbon-carbon bond adjacent to a carbonyl, which converts ketones to esters (By similarity). Active on diverse carbonyl compounds, whereas soft nucleophiles are mostly non- or poorly reactive. In contrast with other forms of FMO it is non- or poorly active on 'classical' substrates such as drugs, pesticides, and dietary components containing soft nucleophilic heteroatoms (PubMed:7872795). Able to oxidize drug molecules bearing a carbonyl group on an aliphatic chain, such as nabumetone and pentoxifylline. Also, in the absence of substrates, shows slow but yet significant NADPH oxidase activity (By similarity). Acts as a positive modulator of cholesterol biosynthesis as well as glucose homeostasis, promoting metabolic aging via pleiotropic effects (By similarity).</text>
</comment>
<comment type="catalytic activity">
    <reaction evidence="6">
        <text>N,N-dimethylaniline + NADPH + O2 + H(+) = N,N-dimethylaniline N-oxide + NADP(+) + H2O</text>
        <dbReference type="Rhea" id="RHEA:24468"/>
        <dbReference type="ChEBI" id="CHEBI:15377"/>
        <dbReference type="ChEBI" id="CHEBI:15378"/>
        <dbReference type="ChEBI" id="CHEBI:15379"/>
        <dbReference type="ChEBI" id="CHEBI:16269"/>
        <dbReference type="ChEBI" id="CHEBI:17735"/>
        <dbReference type="ChEBI" id="CHEBI:57783"/>
        <dbReference type="ChEBI" id="CHEBI:58349"/>
        <dbReference type="EC" id="1.14.13.8"/>
    </reaction>
    <physiologicalReaction direction="left-to-right" evidence="8">
        <dbReference type="Rhea" id="RHEA:24469"/>
    </physiologicalReaction>
</comment>
<comment type="catalytic activity">
    <reaction evidence="1">
        <text>NADPH + O2 + H(+) = H2O2 + NADP(+)</text>
        <dbReference type="Rhea" id="RHEA:11260"/>
        <dbReference type="ChEBI" id="CHEBI:15378"/>
        <dbReference type="ChEBI" id="CHEBI:15379"/>
        <dbReference type="ChEBI" id="CHEBI:16240"/>
        <dbReference type="ChEBI" id="CHEBI:57783"/>
        <dbReference type="ChEBI" id="CHEBI:58349"/>
        <dbReference type="EC" id="1.6.3.1"/>
    </reaction>
    <physiologicalReaction direction="left-to-right" evidence="1">
        <dbReference type="Rhea" id="RHEA:11261"/>
    </physiologicalReaction>
</comment>
<comment type="catalytic activity">
    <reaction evidence="1">
        <text>heptan-2-one + NADPH + O2 + H(+) = pentyl acetate + NADP(+) + H2O</text>
        <dbReference type="Rhea" id="RHEA:54836"/>
        <dbReference type="ChEBI" id="CHEBI:5672"/>
        <dbReference type="ChEBI" id="CHEBI:15377"/>
        <dbReference type="ChEBI" id="CHEBI:15378"/>
        <dbReference type="ChEBI" id="CHEBI:15379"/>
        <dbReference type="ChEBI" id="CHEBI:57783"/>
        <dbReference type="ChEBI" id="CHEBI:58349"/>
        <dbReference type="ChEBI" id="CHEBI:87362"/>
    </reaction>
    <physiologicalReaction direction="left-to-right" evidence="1">
        <dbReference type="Rhea" id="RHEA:54837"/>
    </physiologicalReaction>
</comment>
<comment type="catalytic activity">
    <reaction evidence="1">
        <text>octan-3-one + NADPH + O2 + H(+) = pentyl propanoate + NADP(+) + H2O</text>
        <dbReference type="Rhea" id="RHEA:54840"/>
        <dbReference type="ChEBI" id="CHEBI:15377"/>
        <dbReference type="ChEBI" id="CHEBI:15378"/>
        <dbReference type="ChEBI" id="CHEBI:15379"/>
        <dbReference type="ChEBI" id="CHEBI:57783"/>
        <dbReference type="ChEBI" id="CHEBI:58349"/>
        <dbReference type="ChEBI" id="CHEBI:80946"/>
        <dbReference type="ChEBI" id="CHEBI:87373"/>
    </reaction>
    <physiologicalReaction direction="left-to-right" evidence="1">
        <dbReference type="Rhea" id="RHEA:54841"/>
    </physiologicalReaction>
</comment>
<comment type="catalytic activity">
    <reaction evidence="1">
        <text>octan-3-one + NADPH + O2 + H(+) = ethyl hexanoate + NADP(+) + H2O</text>
        <dbReference type="Rhea" id="RHEA:54856"/>
        <dbReference type="ChEBI" id="CHEBI:15377"/>
        <dbReference type="ChEBI" id="CHEBI:15378"/>
        <dbReference type="ChEBI" id="CHEBI:15379"/>
        <dbReference type="ChEBI" id="CHEBI:57783"/>
        <dbReference type="ChEBI" id="CHEBI:58349"/>
        <dbReference type="ChEBI" id="CHEBI:80946"/>
        <dbReference type="ChEBI" id="CHEBI:86055"/>
    </reaction>
    <physiologicalReaction direction="left-to-right" evidence="1">
        <dbReference type="Rhea" id="RHEA:54857"/>
    </physiologicalReaction>
</comment>
<comment type="catalytic activity">
    <reaction evidence="1">
        <text>hexan-3-one + NADPH + O2 + H(+) = ethyl butanoate + NADP(+) + H2O</text>
        <dbReference type="Rhea" id="RHEA:54844"/>
        <dbReference type="ChEBI" id="CHEBI:15377"/>
        <dbReference type="ChEBI" id="CHEBI:15378"/>
        <dbReference type="ChEBI" id="CHEBI:15379"/>
        <dbReference type="ChEBI" id="CHEBI:57783"/>
        <dbReference type="ChEBI" id="CHEBI:58349"/>
        <dbReference type="ChEBI" id="CHEBI:88764"/>
        <dbReference type="ChEBI" id="CHEBI:89891"/>
    </reaction>
    <physiologicalReaction direction="left-to-right" evidence="1">
        <dbReference type="Rhea" id="RHEA:54845"/>
    </physiologicalReaction>
</comment>
<comment type="catalytic activity">
    <reaction evidence="1">
        <text>hexan-3-one + NADPH + O2 + H(+) = propyl propanoate + NADP(+) + H2O</text>
        <dbReference type="Rhea" id="RHEA:54848"/>
        <dbReference type="ChEBI" id="CHEBI:15377"/>
        <dbReference type="ChEBI" id="CHEBI:15378"/>
        <dbReference type="ChEBI" id="CHEBI:15379"/>
        <dbReference type="ChEBI" id="CHEBI:57783"/>
        <dbReference type="ChEBI" id="CHEBI:58349"/>
        <dbReference type="ChEBI" id="CHEBI:89828"/>
        <dbReference type="ChEBI" id="CHEBI:89891"/>
    </reaction>
    <physiologicalReaction direction="left-to-right" evidence="1">
        <dbReference type="Rhea" id="RHEA:54849"/>
    </physiologicalReaction>
</comment>
<comment type="catalytic activity">
    <reaction evidence="1">
        <text>heptan-4-one + NADPH + O2 + H(+) = propyl butanoate + NADP(+) + H2O</text>
        <dbReference type="Rhea" id="RHEA:54852"/>
        <dbReference type="ChEBI" id="CHEBI:15377"/>
        <dbReference type="ChEBI" id="CHEBI:15378"/>
        <dbReference type="ChEBI" id="CHEBI:15379"/>
        <dbReference type="ChEBI" id="CHEBI:57783"/>
        <dbReference type="ChEBI" id="CHEBI:58349"/>
        <dbReference type="ChEBI" id="CHEBI:89484"/>
        <dbReference type="ChEBI" id="CHEBI:89719"/>
    </reaction>
    <physiologicalReaction direction="left-to-right" evidence="1">
        <dbReference type="Rhea" id="RHEA:54853"/>
    </physiologicalReaction>
</comment>
<comment type="catalytic activity">
    <reaction evidence="1">
        <text>(2E)-geranial + NADPH + O2 + H(+) = (1E)-2,6-dimethylhepta-1,5-dien-1-yl formate + NADP(+) + H2O</text>
        <dbReference type="Rhea" id="RHEA:54860"/>
        <dbReference type="ChEBI" id="CHEBI:15377"/>
        <dbReference type="ChEBI" id="CHEBI:15378"/>
        <dbReference type="ChEBI" id="CHEBI:15379"/>
        <dbReference type="ChEBI" id="CHEBI:16980"/>
        <dbReference type="ChEBI" id="CHEBI:57783"/>
        <dbReference type="ChEBI" id="CHEBI:58349"/>
        <dbReference type="ChEBI" id="CHEBI:138375"/>
    </reaction>
    <physiologicalReaction direction="left-to-right" evidence="1">
        <dbReference type="Rhea" id="RHEA:54861"/>
    </physiologicalReaction>
</comment>
<comment type="catalytic activity">
    <reaction evidence="1">
        <text>sulcatone + NADPH + O2 + H(+) = 4-methylpent-3-en-1-yl acetate + NADP(+) + H2O</text>
        <dbReference type="Rhea" id="RHEA:54864"/>
        <dbReference type="ChEBI" id="CHEBI:15377"/>
        <dbReference type="ChEBI" id="CHEBI:15378"/>
        <dbReference type="ChEBI" id="CHEBI:15379"/>
        <dbReference type="ChEBI" id="CHEBI:16310"/>
        <dbReference type="ChEBI" id="CHEBI:57783"/>
        <dbReference type="ChEBI" id="CHEBI:58349"/>
        <dbReference type="ChEBI" id="CHEBI:138373"/>
    </reaction>
    <physiologicalReaction direction="left-to-right" evidence="1">
        <dbReference type="Rhea" id="RHEA:54865"/>
    </physiologicalReaction>
</comment>
<comment type="cofactor">
    <cofactor>
        <name>FAD</name>
        <dbReference type="ChEBI" id="CHEBI:57692"/>
    </cofactor>
</comment>
<comment type="subcellular location">
    <subcellularLocation>
        <location evidence="1">Microsome membrane</location>
    </subcellularLocation>
    <subcellularLocation>
        <location evidence="1">Endoplasmic reticulum membrane</location>
    </subcellularLocation>
</comment>
<comment type="tissue specificity">
    <text evidence="6">Expressed in liver.</text>
</comment>
<comment type="similarity">
    <text evidence="7">Belongs to the FMO family.</text>
</comment>
<keyword id="KW-0256">Endoplasmic reticulum</keyword>
<keyword id="KW-0274">FAD</keyword>
<keyword id="KW-0285">Flavoprotein</keyword>
<keyword id="KW-0443">Lipid metabolism</keyword>
<keyword id="KW-0472">Membrane</keyword>
<keyword id="KW-0488">Methylation</keyword>
<keyword id="KW-0492">Microsome</keyword>
<keyword id="KW-0503">Monooxygenase</keyword>
<keyword id="KW-0521">NADP</keyword>
<keyword id="KW-0560">Oxidoreductase</keyword>
<keyword id="KW-0597">Phosphoprotein</keyword>
<keyword id="KW-1185">Reference proteome</keyword>
<keyword id="KW-0812">Transmembrane</keyword>
<keyword id="KW-1133">Transmembrane helix</keyword>
<dbReference type="EC" id="1.14.13.8" evidence="6"/>
<dbReference type="EC" id="1.6.3.1" evidence="1"/>
<dbReference type="EMBL" id="L37081">
    <property type="protein sequence ID" value="AAA67848.1"/>
    <property type="molecule type" value="mRNA"/>
</dbReference>
<dbReference type="PIR" id="S71617">
    <property type="entry name" value="S71617"/>
</dbReference>
<dbReference type="RefSeq" id="NP_001166418.1">
    <property type="nucleotide sequence ID" value="NM_001172947.1"/>
</dbReference>
<dbReference type="RefSeq" id="XP_012998115.1">
    <property type="nucleotide sequence ID" value="XM_013142661.1"/>
</dbReference>
<dbReference type="RefSeq" id="XP_012998116.1">
    <property type="nucleotide sequence ID" value="XM_013142662.1"/>
</dbReference>
<dbReference type="RefSeq" id="XP_012998117.1">
    <property type="nucleotide sequence ID" value="XM_013142663.1"/>
</dbReference>
<dbReference type="SMR" id="P49109"/>
<dbReference type="FunCoup" id="P49109">
    <property type="interactions" value="1323"/>
</dbReference>
<dbReference type="STRING" id="10141.ENSCPOP00000012498"/>
<dbReference type="Ensembl" id="ENSCPOT00000014008.3">
    <property type="protein sequence ID" value="ENSCPOP00000012497.2"/>
    <property type="gene ID" value="ENSCPOG00000013868.4"/>
</dbReference>
<dbReference type="Ensembl" id="ENSCPOT00000014009.3">
    <property type="protein sequence ID" value="ENSCPOP00000012498.3"/>
    <property type="gene ID" value="ENSCPOG00000013868.4"/>
</dbReference>
<dbReference type="GeneID" id="100135521"/>
<dbReference type="KEGG" id="cpoc:100135521"/>
<dbReference type="CTD" id="2330"/>
<dbReference type="VEuPathDB" id="HostDB:ENSCPOG00000013868"/>
<dbReference type="eggNOG" id="KOG1399">
    <property type="taxonomic scope" value="Eukaryota"/>
</dbReference>
<dbReference type="GeneTree" id="ENSGT00940000160493"/>
<dbReference type="HOGENOM" id="CLU_006909_8_2_1"/>
<dbReference type="InParanoid" id="P49109"/>
<dbReference type="OMA" id="CCTGYDI"/>
<dbReference type="OrthoDB" id="66881at2759"/>
<dbReference type="Proteomes" id="UP000005447">
    <property type="component" value="Unassembled WGS sequence"/>
</dbReference>
<dbReference type="Bgee" id="ENSCPOG00000013868">
    <property type="expression patterns" value="Expressed in liver and 12 other cell types or tissues"/>
</dbReference>
<dbReference type="GO" id="GO:0005829">
    <property type="term" value="C:cytosol"/>
    <property type="evidence" value="ECO:0007669"/>
    <property type="project" value="Ensembl"/>
</dbReference>
<dbReference type="GO" id="GO:0005789">
    <property type="term" value="C:endoplasmic reticulum membrane"/>
    <property type="evidence" value="ECO:0007669"/>
    <property type="project" value="UniProtKB-SubCell"/>
</dbReference>
<dbReference type="GO" id="GO:0004031">
    <property type="term" value="F:aldehyde oxidase activity"/>
    <property type="evidence" value="ECO:0007669"/>
    <property type="project" value="Ensembl"/>
</dbReference>
<dbReference type="GO" id="GO:0050660">
    <property type="term" value="F:flavin adenine dinucleotide binding"/>
    <property type="evidence" value="ECO:0007669"/>
    <property type="project" value="InterPro"/>
</dbReference>
<dbReference type="GO" id="GO:0004497">
    <property type="term" value="F:monooxygenase activity"/>
    <property type="evidence" value="ECO:0000250"/>
    <property type="project" value="UniProtKB"/>
</dbReference>
<dbReference type="GO" id="GO:0004499">
    <property type="term" value="F:N,N-dimethylaniline monooxygenase activity"/>
    <property type="evidence" value="ECO:0007669"/>
    <property type="project" value="InterPro"/>
</dbReference>
<dbReference type="GO" id="GO:0050661">
    <property type="term" value="F:NADP binding"/>
    <property type="evidence" value="ECO:0007669"/>
    <property type="project" value="InterPro"/>
</dbReference>
<dbReference type="GO" id="GO:0106294">
    <property type="term" value="F:NADPH oxidase H202-forming activity"/>
    <property type="evidence" value="ECO:0007669"/>
    <property type="project" value="RHEA"/>
</dbReference>
<dbReference type="GO" id="GO:0006629">
    <property type="term" value="P:lipid metabolic process"/>
    <property type="evidence" value="ECO:0007669"/>
    <property type="project" value="UniProtKB-KW"/>
</dbReference>
<dbReference type="GO" id="GO:0090181">
    <property type="term" value="P:regulation of cholesterol metabolic process"/>
    <property type="evidence" value="ECO:0000250"/>
    <property type="project" value="UniProtKB"/>
</dbReference>
<dbReference type="GO" id="GO:0006805">
    <property type="term" value="P:xenobiotic metabolic process"/>
    <property type="evidence" value="ECO:0000250"/>
    <property type="project" value="UniProtKB"/>
</dbReference>
<dbReference type="FunFam" id="3.50.50.60:FF:000042">
    <property type="entry name" value="Dimethylaniline monooxygenase [N-oxide-forming]"/>
    <property type="match status" value="1"/>
</dbReference>
<dbReference type="FunFam" id="3.50.50.60:FF:000073">
    <property type="entry name" value="Dimethylaniline monooxygenase [N-oxide-forming]"/>
    <property type="match status" value="1"/>
</dbReference>
<dbReference type="FunFam" id="3.50.50.60:FF:000409">
    <property type="entry name" value="Dimethylaniline monooxygenase [N-oxide-forming]"/>
    <property type="match status" value="1"/>
</dbReference>
<dbReference type="Gene3D" id="3.50.50.60">
    <property type="entry name" value="FAD/NAD(P)-binding domain"/>
    <property type="match status" value="2"/>
</dbReference>
<dbReference type="InterPro" id="IPR036188">
    <property type="entry name" value="FAD/NAD-bd_sf"/>
</dbReference>
<dbReference type="InterPro" id="IPR000960">
    <property type="entry name" value="Flavin_mOase"/>
</dbReference>
<dbReference type="InterPro" id="IPR020946">
    <property type="entry name" value="Flavin_mOase-like"/>
</dbReference>
<dbReference type="InterPro" id="IPR002257">
    <property type="entry name" value="Flavin_mOase_5"/>
</dbReference>
<dbReference type="InterPro" id="IPR050346">
    <property type="entry name" value="FMO-like"/>
</dbReference>
<dbReference type="PANTHER" id="PTHR23023">
    <property type="entry name" value="DIMETHYLANILINE MONOOXYGENASE"/>
    <property type="match status" value="1"/>
</dbReference>
<dbReference type="Pfam" id="PF00743">
    <property type="entry name" value="FMO-like"/>
    <property type="match status" value="1"/>
</dbReference>
<dbReference type="PIRSF" id="PIRSF000332">
    <property type="entry name" value="FMO"/>
    <property type="match status" value="1"/>
</dbReference>
<dbReference type="PRINTS" id="PR00370">
    <property type="entry name" value="FMOXYGENASE"/>
</dbReference>
<dbReference type="PRINTS" id="PR01125">
    <property type="entry name" value="FMOXYGENASE5"/>
</dbReference>
<dbReference type="SUPFAM" id="SSF51905">
    <property type="entry name" value="FAD/NAD(P)-binding domain"/>
    <property type="match status" value="2"/>
</dbReference>
<name>FMO5_CAVPO</name>
<proteinExistence type="evidence at protein level"/>